<reference key="1">
    <citation type="journal article" date="1991" name="FEBS Lett.">
        <title>Isolation of high-molecular-weight C-type natriuretic peptide from the heart of a cartilaginous fish (European dogfish, Scyliorhinus canicula).</title>
        <authorList>
            <person name="Suzuki R."/>
            <person name="Takahashi A."/>
            <person name="Hazon N."/>
            <person name="Takei Y."/>
        </authorList>
    </citation>
    <scope>PROTEIN SEQUENCE</scope>
    <source>
        <tissue>Heart atrium</tissue>
        <tissue>Heart ventricle</tissue>
    </source>
</reference>
<evidence type="ECO:0000250" key="1"/>
<evidence type="ECO:0000256" key="2">
    <source>
        <dbReference type="SAM" id="MobiDB-lite"/>
    </source>
</evidence>
<evidence type="ECO:0000305" key="3"/>
<keyword id="KW-0165">Cleavage on pair of basic residues</keyword>
<keyword id="KW-0903">Direct protein sequencing</keyword>
<keyword id="KW-1015">Disulfide bond</keyword>
<keyword id="KW-0372">Hormone</keyword>
<keyword id="KW-0964">Secreted</keyword>
<keyword id="KW-0838">Vasoactive</keyword>
<feature type="chain" id="PRO_0000001603" description="C-type natriuretic peptide prohormone">
    <location>
        <begin position="1"/>
        <end position="115"/>
    </location>
</feature>
<feature type="peptide" id="PRO_0000001604" description="CNP-39">
    <location>
        <begin position="77"/>
        <end position="115"/>
    </location>
</feature>
<feature type="peptide" id="PRO_0000001605" description="CNP-38">
    <location>
        <begin position="78"/>
        <end position="115"/>
    </location>
</feature>
<feature type="peptide" id="PRO_0000001606" description="CNP-22">
    <location>
        <begin position="94"/>
        <end position="115"/>
    </location>
</feature>
<feature type="region of interest" description="Disordered" evidence="2">
    <location>
        <begin position="24"/>
        <end position="49"/>
    </location>
</feature>
<feature type="disulfide bond" evidence="1">
    <location>
        <begin position="99"/>
        <end position="115"/>
    </location>
</feature>
<protein>
    <recommendedName>
        <fullName>C-type natriuretic peptide prohormone</fullName>
    </recommendedName>
    <alternativeName>
        <fullName>CNP-115</fullName>
    </alternativeName>
    <component>
        <recommendedName>
            <fullName>CNP-39</fullName>
        </recommendedName>
    </component>
    <component>
        <recommendedName>
            <fullName>CNP-38</fullName>
        </recommendedName>
    </component>
    <component>
        <recommendedName>
            <fullName>CNP-22</fullName>
        </recommendedName>
    </component>
</protein>
<accession>P23259</accession>
<comment type="function">
    <text evidence="1">Hormone which may be vasoactive and natriuretic. Has a cGMP-stimulating activity (By similarity).</text>
</comment>
<comment type="subcellular location">
    <subcellularLocation>
        <location>Secreted</location>
    </subcellularLocation>
</comment>
<comment type="tissue specificity">
    <text>CNP-115 is differentially processed to produce CNP-38 and CNP-39 in the heart and CNP-22 in the brain.</text>
</comment>
<comment type="similarity">
    <text evidence="3">Belongs to the natriuretic peptide family.</text>
</comment>
<name>ANFC_SCYCA</name>
<proteinExistence type="evidence at protein level"/>
<sequence length="115" mass="12885">RPRSDDSLQTLSRLLEDEYGHYLPSDELNNEAEEMSPAASLPELNADQSDLELPWERESREIGGRPFRQEAVLARLLKDLSNNPLRFRGRSKKGPSRGCFGVKLDRIGAMSGLGC</sequence>
<dbReference type="PIR" id="S15822">
    <property type="entry name" value="S15822"/>
</dbReference>
<dbReference type="GO" id="GO:0005576">
    <property type="term" value="C:extracellular region"/>
    <property type="evidence" value="ECO:0007669"/>
    <property type="project" value="UniProtKB-SubCell"/>
</dbReference>
<dbReference type="GO" id="GO:0005179">
    <property type="term" value="F:hormone activity"/>
    <property type="evidence" value="ECO:0007669"/>
    <property type="project" value="UniProtKB-KW"/>
</dbReference>
<dbReference type="GO" id="GO:0097746">
    <property type="term" value="P:blood vessel diameter maintenance"/>
    <property type="evidence" value="ECO:0007669"/>
    <property type="project" value="UniProtKB-KW"/>
</dbReference>
<dbReference type="GO" id="GO:0006182">
    <property type="term" value="P:cGMP biosynthetic process"/>
    <property type="evidence" value="ECO:0000250"/>
    <property type="project" value="UniProtKB"/>
</dbReference>
<dbReference type="GO" id="GO:0007168">
    <property type="term" value="P:receptor guanylyl cyclase signaling pathway"/>
    <property type="evidence" value="ECO:0000250"/>
    <property type="project" value="UniProtKB"/>
</dbReference>
<dbReference type="InterPro" id="IPR002406">
    <property type="entry name" value="C_natriurtcpep"/>
</dbReference>
<dbReference type="InterPro" id="IPR000663">
    <property type="entry name" value="Natr_peptide"/>
</dbReference>
<dbReference type="InterPro" id="IPR030480">
    <property type="entry name" value="Natr_peptide_CS"/>
</dbReference>
<dbReference type="PANTHER" id="PTHR12167">
    <property type="entry name" value="C-TYPE NATRIURETIC PEPTIDE"/>
    <property type="match status" value="1"/>
</dbReference>
<dbReference type="PANTHER" id="PTHR12167:SF5">
    <property type="entry name" value="C-TYPE NATRIURETIC PEPTIDE 3-LIKE PRECURSOR"/>
    <property type="match status" value="1"/>
</dbReference>
<dbReference type="Pfam" id="PF00212">
    <property type="entry name" value="ANP"/>
    <property type="match status" value="1"/>
</dbReference>
<dbReference type="PRINTS" id="PR00713">
    <property type="entry name" value="CNATPEPTIDE"/>
</dbReference>
<dbReference type="PRINTS" id="PR00710">
    <property type="entry name" value="NATPEPTIDES"/>
</dbReference>
<dbReference type="SMART" id="SM00183">
    <property type="entry name" value="NAT_PEP"/>
    <property type="match status" value="1"/>
</dbReference>
<dbReference type="PROSITE" id="PS00263">
    <property type="entry name" value="NATRIURETIC_PEPTIDE"/>
    <property type="match status" value="1"/>
</dbReference>
<organism>
    <name type="scientific">Scyliorhinus canicula</name>
    <name type="common">Small-spotted catshark</name>
    <name type="synonym">Squalus canicula</name>
    <dbReference type="NCBI Taxonomy" id="7830"/>
    <lineage>
        <taxon>Eukaryota</taxon>
        <taxon>Metazoa</taxon>
        <taxon>Chordata</taxon>
        <taxon>Craniata</taxon>
        <taxon>Vertebrata</taxon>
        <taxon>Chondrichthyes</taxon>
        <taxon>Elasmobranchii</taxon>
        <taxon>Galeomorphii</taxon>
        <taxon>Galeoidea</taxon>
        <taxon>Carcharhiniformes</taxon>
        <taxon>Scyliorhinidae</taxon>
        <taxon>Scyliorhinus</taxon>
    </lineage>
</organism>